<keyword id="KW-0131">Cell cycle</keyword>
<keyword id="KW-0132">Cell division</keyword>
<keyword id="KW-0963">Cytoplasm</keyword>
<keyword id="KW-0206">Cytoskeleton</keyword>
<keyword id="KW-0493">Microtubule</keyword>
<keyword id="KW-0498">Mitosis</keyword>
<keyword id="KW-1185">Reference proteome</keyword>
<keyword id="KW-0677">Repeat</keyword>
<keyword id="KW-0853">WD repeat</keyword>
<gene>
    <name evidence="2" type="primary">KATNB1</name>
    <name type="ORF">RCJMB04_23h13</name>
</gene>
<reference key="1">
    <citation type="submission" date="2006-02" db="EMBL/GenBank/DDBJ databases">
        <title>Oscillation of brain p80 katanin during chicken development.</title>
        <authorList>
            <person name="Yildiz A."/>
            <person name="Baas P.W."/>
            <person name="Karabay A."/>
        </authorList>
    </citation>
    <scope>NUCLEOTIDE SEQUENCE [MRNA]</scope>
</reference>
<reference key="2">
    <citation type="journal article" date="2005" name="Genome Biol.">
        <title>Full-length cDNAs from chicken bursal lymphocytes to facilitate gene function analysis.</title>
        <authorList>
            <person name="Caldwell R.B."/>
            <person name="Kierzek A.M."/>
            <person name="Arakawa H."/>
            <person name="Bezzubov Y."/>
            <person name="Zaim J."/>
            <person name="Fiedler P."/>
            <person name="Kutter S."/>
            <person name="Blagodatski A."/>
            <person name="Kostovska D."/>
            <person name="Koter M."/>
            <person name="Plachy J."/>
            <person name="Carninci P."/>
            <person name="Hayashizaki Y."/>
            <person name="Buerstedde J.-M."/>
        </authorList>
    </citation>
    <scope>NUCLEOTIDE SEQUENCE [LARGE SCALE MRNA]</scope>
    <source>
        <strain>CB</strain>
        <tissue>Bursa of Fabricius</tissue>
    </source>
</reference>
<comment type="function">
    <text evidence="2">Participates in a complex which severs microtubules in an ATP-dependent manner. May act to target the enzymatic subunit of this complex to sites of action such as the centrosome. Microtubule severing may promote rapid reorganization of cellular microtubule arrays and the release of microtubules from the centrosome following nucleation.</text>
</comment>
<comment type="subunit">
    <text evidence="2">Interacts with KATNA1. This interaction enhances the microtubule binding and severing activity of KATNA1 and also targets this activity to the centrosome.</text>
</comment>
<comment type="subcellular location">
    <subcellularLocation>
        <location evidence="2">Cytoplasm</location>
    </subcellularLocation>
    <subcellularLocation>
        <location evidence="2">Cytoplasm</location>
        <location evidence="2">Cytoskeleton</location>
        <location evidence="2">Microtubule organizing center</location>
        <location evidence="2">Centrosome</location>
    </subcellularLocation>
    <subcellularLocation>
        <location evidence="2">Cytoplasm</location>
        <location evidence="2">Cytoskeleton</location>
        <location evidence="2">Spindle pole</location>
    </subcellularLocation>
    <subcellularLocation>
        <location evidence="2">Cytoplasm</location>
        <location evidence="2">Cytoskeleton</location>
    </subcellularLocation>
    <subcellularLocation>
        <location evidence="1">Cytoplasm</location>
        <location evidence="1">Cytoskeleton</location>
        <location evidence="1">Spindle</location>
    </subcellularLocation>
    <text evidence="2">Predominantly cytoplasmic. Localized to the interphase centrosome and mitotic spindle poles.</text>
</comment>
<comment type="similarity">
    <text evidence="2">Belongs to the WD repeat KATNB1 family.</text>
</comment>
<comment type="sequence caution" evidence="4">
    <conflict type="frameshift">
        <sequence resource="EMBL-CDS" id="CAG32345"/>
    </conflict>
</comment>
<evidence type="ECO:0000250" key="1">
    <source>
        <dbReference type="UniProtKB" id="Q9BVA0"/>
    </source>
</evidence>
<evidence type="ECO:0000255" key="2">
    <source>
        <dbReference type="HAMAP-Rule" id="MF_03022"/>
    </source>
</evidence>
<evidence type="ECO:0000256" key="3">
    <source>
        <dbReference type="SAM" id="MobiDB-lite"/>
    </source>
</evidence>
<evidence type="ECO:0000305" key="4"/>
<dbReference type="EMBL" id="DQ410670">
    <property type="protein sequence ID" value="ABD72238.1"/>
    <property type="molecule type" value="mRNA"/>
</dbReference>
<dbReference type="EMBL" id="AJ720686">
    <property type="protein sequence ID" value="CAG32345.1"/>
    <property type="status" value="ALT_FRAME"/>
    <property type="molecule type" value="mRNA"/>
</dbReference>
<dbReference type="RefSeq" id="NP_001025730.2">
    <property type="nucleotide sequence ID" value="NM_001030559.3"/>
</dbReference>
<dbReference type="RefSeq" id="XP_015147779.1">
    <property type="nucleotide sequence ID" value="XM_015292293.4"/>
</dbReference>
<dbReference type="RefSeq" id="XP_046781351.1">
    <property type="nucleotide sequence ID" value="XM_046925395.1"/>
</dbReference>
<dbReference type="SMR" id="Q5ZIU8"/>
<dbReference type="FunCoup" id="Q5ZIU8">
    <property type="interactions" value="557"/>
</dbReference>
<dbReference type="STRING" id="9031.ENSGALP00000057300"/>
<dbReference type="PaxDb" id="9031-ENSGALP00000039652"/>
<dbReference type="GeneID" id="415631"/>
<dbReference type="KEGG" id="gga:415631"/>
<dbReference type="CTD" id="10300"/>
<dbReference type="VEuPathDB" id="HostDB:geneid_415631"/>
<dbReference type="eggNOG" id="KOG0267">
    <property type="taxonomic scope" value="Eukaryota"/>
</dbReference>
<dbReference type="HOGENOM" id="CLU_007811_0_0_1"/>
<dbReference type="InParanoid" id="Q5ZIU8"/>
<dbReference type="OrthoDB" id="10251605at2759"/>
<dbReference type="PhylomeDB" id="Q5ZIU8"/>
<dbReference type="PRO" id="PR:Q5ZIU8"/>
<dbReference type="Proteomes" id="UP000000539">
    <property type="component" value="Chromosome 11"/>
</dbReference>
<dbReference type="Bgee" id="ENSGALG00000034373">
    <property type="expression patterns" value="Expressed in testis and 13 other cell types or tissues"/>
</dbReference>
<dbReference type="GO" id="GO:0005813">
    <property type="term" value="C:centrosome"/>
    <property type="evidence" value="ECO:0007669"/>
    <property type="project" value="UniProtKB-SubCell"/>
</dbReference>
<dbReference type="GO" id="GO:0005737">
    <property type="term" value="C:cytoplasm"/>
    <property type="evidence" value="ECO:0000250"/>
    <property type="project" value="UniProtKB"/>
</dbReference>
<dbReference type="GO" id="GO:0008352">
    <property type="term" value="C:katanin complex"/>
    <property type="evidence" value="ECO:0000318"/>
    <property type="project" value="GO_Central"/>
</dbReference>
<dbReference type="GO" id="GO:0005874">
    <property type="term" value="C:microtubule"/>
    <property type="evidence" value="ECO:0007669"/>
    <property type="project" value="UniProtKB-KW"/>
</dbReference>
<dbReference type="GO" id="GO:0005819">
    <property type="term" value="C:spindle"/>
    <property type="evidence" value="ECO:0000250"/>
    <property type="project" value="UniProtKB"/>
</dbReference>
<dbReference type="GO" id="GO:0000922">
    <property type="term" value="C:spindle pole"/>
    <property type="evidence" value="ECO:0000250"/>
    <property type="project" value="UniProtKB"/>
</dbReference>
<dbReference type="GO" id="GO:0008017">
    <property type="term" value="F:microtubule binding"/>
    <property type="evidence" value="ECO:0007669"/>
    <property type="project" value="UniProtKB-UniRule"/>
</dbReference>
<dbReference type="GO" id="GO:0051301">
    <property type="term" value="P:cell division"/>
    <property type="evidence" value="ECO:0007669"/>
    <property type="project" value="UniProtKB-KW"/>
</dbReference>
<dbReference type="GO" id="GO:0007019">
    <property type="term" value="P:microtubule depolymerization"/>
    <property type="evidence" value="ECO:0000318"/>
    <property type="project" value="GO_Central"/>
</dbReference>
<dbReference type="GO" id="GO:0051013">
    <property type="term" value="P:microtubule severing"/>
    <property type="evidence" value="ECO:0007669"/>
    <property type="project" value="UniProtKB-UniRule"/>
</dbReference>
<dbReference type="CDD" id="cd00200">
    <property type="entry name" value="WD40"/>
    <property type="match status" value="1"/>
</dbReference>
<dbReference type="FunFam" id="2.130.10.10:FF:000846">
    <property type="entry name" value="Katanin p80 WD40 repeat-containing subunit B1 homolog"/>
    <property type="match status" value="1"/>
</dbReference>
<dbReference type="Gene3D" id="2.130.10.10">
    <property type="entry name" value="YVTN repeat-like/Quinoprotein amine dehydrogenase"/>
    <property type="match status" value="1"/>
</dbReference>
<dbReference type="HAMAP" id="MF_03022">
    <property type="entry name" value="Katanin_p80_B1"/>
    <property type="match status" value="1"/>
</dbReference>
<dbReference type="InterPro" id="IPR020472">
    <property type="entry name" value="G-protein_beta_WD-40_rep"/>
</dbReference>
<dbReference type="InterPro" id="IPR028021">
    <property type="entry name" value="Katanin_C-terminal"/>
</dbReference>
<dbReference type="InterPro" id="IPR026962">
    <property type="entry name" value="KTNB1"/>
</dbReference>
<dbReference type="InterPro" id="IPR015943">
    <property type="entry name" value="WD40/YVTN_repeat-like_dom_sf"/>
</dbReference>
<dbReference type="InterPro" id="IPR019775">
    <property type="entry name" value="WD40_repeat_CS"/>
</dbReference>
<dbReference type="InterPro" id="IPR036322">
    <property type="entry name" value="WD40_repeat_dom_sf"/>
</dbReference>
<dbReference type="InterPro" id="IPR001680">
    <property type="entry name" value="WD40_rpt"/>
</dbReference>
<dbReference type="PANTHER" id="PTHR19845">
    <property type="entry name" value="KATANIN P80 SUBUNIT"/>
    <property type="match status" value="1"/>
</dbReference>
<dbReference type="PANTHER" id="PTHR19845:SF0">
    <property type="entry name" value="KATANIN P80 WD40 REPEAT-CONTAINING SUBUNIT B1"/>
    <property type="match status" value="1"/>
</dbReference>
<dbReference type="Pfam" id="PF13925">
    <property type="entry name" value="Katanin_con80"/>
    <property type="match status" value="1"/>
</dbReference>
<dbReference type="Pfam" id="PF00400">
    <property type="entry name" value="WD40"/>
    <property type="match status" value="5"/>
</dbReference>
<dbReference type="PRINTS" id="PR00320">
    <property type="entry name" value="GPROTEINBRPT"/>
</dbReference>
<dbReference type="SMART" id="SM00320">
    <property type="entry name" value="WD40"/>
    <property type="match status" value="6"/>
</dbReference>
<dbReference type="SUPFAM" id="SSF50978">
    <property type="entry name" value="WD40 repeat-like"/>
    <property type="match status" value="1"/>
</dbReference>
<dbReference type="PROSITE" id="PS00678">
    <property type="entry name" value="WD_REPEATS_1"/>
    <property type="match status" value="3"/>
</dbReference>
<dbReference type="PROSITE" id="PS50082">
    <property type="entry name" value="WD_REPEATS_2"/>
    <property type="match status" value="5"/>
</dbReference>
<dbReference type="PROSITE" id="PS50294">
    <property type="entry name" value="WD_REPEATS_REGION"/>
    <property type="match status" value="1"/>
</dbReference>
<protein>
    <recommendedName>
        <fullName evidence="2">Katanin p80 WD40 repeat-containing subunit B1</fullName>
        <shortName evidence="2">Katanin p80 subunit B1</shortName>
    </recommendedName>
    <alternativeName>
        <fullName evidence="2">p80 katanin</fullName>
    </alternativeName>
</protein>
<organism>
    <name type="scientific">Gallus gallus</name>
    <name type="common">Chicken</name>
    <dbReference type="NCBI Taxonomy" id="9031"/>
    <lineage>
        <taxon>Eukaryota</taxon>
        <taxon>Metazoa</taxon>
        <taxon>Chordata</taxon>
        <taxon>Craniata</taxon>
        <taxon>Vertebrata</taxon>
        <taxon>Euteleostomi</taxon>
        <taxon>Archelosauria</taxon>
        <taxon>Archosauria</taxon>
        <taxon>Dinosauria</taxon>
        <taxon>Saurischia</taxon>
        <taxon>Theropoda</taxon>
        <taxon>Coelurosauria</taxon>
        <taxon>Aves</taxon>
        <taxon>Neognathae</taxon>
        <taxon>Galloanserae</taxon>
        <taxon>Galliformes</taxon>
        <taxon>Phasianidae</taxon>
        <taxon>Phasianinae</taxon>
        <taxon>Gallus</taxon>
    </lineage>
</organism>
<proteinExistence type="evidence at transcript level"/>
<accession>Q5ZIU8</accession>
<accession>Q204L7</accession>
<sequence length="657" mass="72738">MAAAVVTKTAWKLQEIVAHSSNVSSLVLGKSTGRLLATGGDDCRVNVWSVNKPNCVMSLTGHTTPIESLQISAKEELIVAGSQSGSIRVWDLEAAKILRTLLGHKANICSLDFHPYGSFVASGSLDTDIKLWDVRRKGCIFKYKSHTQAVRCLRFSPDGKWLASAADDHTVKLWDLTAGKVMFEFTGHSGPVNVVEFHPSEYLLASGSSDRTIRFWDLEKFHVVSCIEEEATPVRCILFNPDGCCLYGGFQDSLRVYGWEPERCFDVVVVNWGKVADLSVCHNQLIGVSFAQSTVSSFVVDLSRVTKSGSVPHGLLRNNELLAQPTPTGSSLRRSYDRPSTSCSKPQRVKHSSESERRSPSSEEDRDEKESKAEIQNPEDYKEIFQPRNAISRTPPHINEPFPAPPEDEPITAKEAVKPNQPVEVQTPLPKQELPETFQRPPIASSTPMPRAEPSVIPAARNEPIGLKASDFLPALKNQSQAELTDEEIMSQIRKGHKTVCMVLTSRHKNLDTVRAVWSTSDMKNSVDAAVATNDLSVVVDLLNIVNQTASLWKLDLCTVVLPQIEKLLQSKYESYVQTGCTSLKLILQRFLPLITDILAAPPSVGVDITREERLHKCRLCYKQLKNISNIVKNKSGLSGRHGSAFRELHLLMAVLE</sequence>
<name>KTNB1_CHICK</name>
<feature type="chain" id="PRO_0000051052" description="Katanin p80 WD40 repeat-containing subunit B1">
    <location>
        <begin position="1"/>
        <end position="657"/>
    </location>
</feature>
<feature type="repeat" description="WD 1">
    <location>
        <begin position="18"/>
        <end position="58"/>
    </location>
</feature>
<feature type="repeat" description="WD 2">
    <location>
        <begin position="61"/>
        <end position="100"/>
    </location>
</feature>
<feature type="repeat" description="WD 3">
    <location>
        <begin position="103"/>
        <end position="142"/>
    </location>
</feature>
<feature type="repeat" description="WD 4">
    <location>
        <begin position="145"/>
        <end position="184"/>
    </location>
</feature>
<feature type="repeat" description="WD 5">
    <location>
        <begin position="187"/>
        <end position="226"/>
    </location>
</feature>
<feature type="repeat" description="WD 6">
    <location>
        <begin position="229"/>
        <end position="269"/>
    </location>
</feature>
<feature type="region of interest" description="Disordered" evidence="3">
    <location>
        <begin position="318"/>
        <end position="410"/>
    </location>
</feature>
<feature type="region of interest" description="Disordered" evidence="3">
    <location>
        <begin position="423"/>
        <end position="454"/>
    </location>
</feature>
<feature type="compositionally biased region" description="Polar residues" evidence="3">
    <location>
        <begin position="325"/>
        <end position="345"/>
    </location>
</feature>
<feature type="compositionally biased region" description="Basic and acidic residues" evidence="3">
    <location>
        <begin position="351"/>
        <end position="385"/>
    </location>
</feature>
<feature type="sequence conflict" description="In Ref. 2; CAG32345." evidence="4" ref="2">
    <original>R</original>
    <variation>Q</variation>
    <location>
        <position position="44"/>
    </location>
</feature>
<feature type="sequence conflict" description="In Ref. 2; CAG32345." evidence="4" ref="2">
    <original>Q</original>
    <variation>QS</variation>
    <location>
        <position position="347"/>
    </location>
</feature>
<feature type="sequence conflict" description="In Ref. 1; ABD72238." evidence="4" ref="1">
    <original>S</original>
    <variation>N</variation>
    <location>
        <position position="359"/>
    </location>
</feature>
<feature type="sequence conflict" description="In Ref. 1; ABD72238." evidence="4" ref="1">
    <original>K</original>
    <variation>T</variation>
    <location>
        <position position="431"/>
    </location>
</feature>